<organism>
    <name type="scientific">Escherichia coli (strain UTI89 / UPEC)</name>
    <dbReference type="NCBI Taxonomy" id="364106"/>
    <lineage>
        <taxon>Bacteria</taxon>
        <taxon>Pseudomonadati</taxon>
        <taxon>Pseudomonadota</taxon>
        <taxon>Gammaproteobacteria</taxon>
        <taxon>Enterobacterales</taxon>
        <taxon>Enterobacteriaceae</taxon>
        <taxon>Escherichia</taxon>
    </lineage>
</organism>
<proteinExistence type="inferred from homology"/>
<feature type="signal peptide" evidence="1">
    <location>
        <begin position="1"/>
        <end position="25"/>
    </location>
</feature>
<feature type="chain" id="PRO_0000355019" description="Putative outer membrane porin BglH">
    <location>
        <begin position="26"/>
        <end position="538"/>
    </location>
</feature>
<accession>Q1R4L6</accession>
<gene>
    <name type="primary">bglH</name>
    <name type="ordered locus">UTI89_C4271</name>
</gene>
<name>BGLH_ECOUT</name>
<protein>
    <recommendedName>
        <fullName>Putative outer membrane porin BglH</fullName>
    </recommendedName>
</protein>
<sequence length="538" mass="60800">MFRRNIITSAILLMAPLAFSAQSLAESLTVEQRLELLEKALRETQSELKKYKDEEKKKYTPATVNRSVSTNDQGYAANPFPTSRAAKPDAVLVKNEEKNASETGSIYSSMTLKDFSKFVKDEIGFSYNGYYRSGWGTASHGSPKSWAIGSLGRFGNEYSGWFDLQLKQRVYNENGKRVDAIVMMDGNVGQQYSTGWFGDNAGGENFMQFSDMYVTTKGFLPFAPEADFWVGKHGAPKIEIQMLDWKTQRTDAAAGVGLENWKVGPGKIDIALVREDVDDYDRSLQNKQQINTNTIDLRYKDIPLWDKVTLMVSGRYVTANESASEKDNQDNNGYYDWKDTWMFGTSLTQKFDKGGFNEFSFLVANNSIASNFGRYAGASPFTTFNGRYYGYHTGGTAVRLTSQGEAYIGDHFIVANAIVYSFGNDIYSYETGAHSDFESIRAVVRPAYIWDQYNQTGVELGYFTQQNKDANSNKFNESGYKTTLFHTFKVNTSMLTSRPEIRFYATYIKALENELDGFTFEDNKDDQFAVGAQAEIWW</sequence>
<reference key="1">
    <citation type="journal article" date="2006" name="Proc. Natl. Acad. Sci. U.S.A.">
        <title>Identification of genes subject to positive selection in uropathogenic strains of Escherichia coli: a comparative genomics approach.</title>
        <authorList>
            <person name="Chen S.L."/>
            <person name="Hung C.-S."/>
            <person name="Xu J."/>
            <person name="Reigstad C.S."/>
            <person name="Magrini V."/>
            <person name="Sabo A."/>
            <person name="Blasiar D."/>
            <person name="Bieri T."/>
            <person name="Meyer R.R."/>
            <person name="Ozersky P."/>
            <person name="Armstrong J.R."/>
            <person name="Fulton R.S."/>
            <person name="Latreille J.P."/>
            <person name="Spieth J."/>
            <person name="Hooton T.M."/>
            <person name="Mardis E.R."/>
            <person name="Hultgren S.J."/>
            <person name="Gordon J.I."/>
        </authorList>
    </citation>
    <scope>NUCLEOTIDE SEQUENCE [LARGE SCALE GENOMIC DNA]</scope>
    <source>
        <strain>UTI89 / UPEC</strain>
    </source>
</reference>
<evidence type="ECO:0000255" key="1"/>
<evidence type="ECO:0000305" key="2"/>
<comment type="function">
    <text evidence="2">May be a sugar porin with a broad carbohydrate specificity.</text>
</comment>
<comment type="subcellular location">
    <subcellularLocation>
        <location evidence="2">Cell outer membrane</location>
        <topology evidence="2">Multi-pass membrane protein</topology>
    </subcellularLocation>
</comment>
<comment type="similarity">
    <text evidence="2">Belongs to the porin LamB (TC 1.B.3) family.</text>
</comment>
<dbReference type="EMBL" id="CP000243">
    <property type="protein sequence ID" value="ABE09698.1"/>
    <property type="molecule type" value="Genomic_DNA"/>
</dbReference>
<dbReference type="RefSeq" id="WP_000489817.1">
    <property type="nucleotide sequence ID" value="NZ_CP064825.1"/>
</dbReference>
<dbReference type="SMR" id="Q1R4L6"/>
<dbReference type="KEGG" id="eci:UTI89_C4271"/>
<dbReference type="HOGENOM" id="CLU_032473_2_1_6"/>
<dbReference type="Proteomes" id="UP000001952">
    <property type="component" value="Chromosome"/>
</dbReference>
<dbReference type="GO" id="GO:0009279">
    <property type="term" value="C:cell outer membrane"/>
    <property type="evidence" value="ECO:0007669"/>
    <property type="project" value="UniProtKB-SubCell"/>
</dbReference>
<dbReference type="GO" id="GO:0046930">
    <property type="term" value="C:pore complex"/>
    <property type="evidence" value="ECO:0007669"/>
    <property type="project" value="UniProtKB-KW"/>
</dbReference>
<dbReference type="GO" id="GO:0015144">
    <property type="term" value="F:carbohydrate transmembrane transporter activity"/>
    <property type="evidence" value="ECO:0007669"/>
    <property type="project" value="TreeGrafter"/>
</dbReference>
<dbReference type="GO" id="GO:0015288">
    <property type="term" value="F:porin activity"/>
    <property type="evidence" value="ECO:0007669"/>
    <property type="project" value="UniProtKB-KW"/>
</dbReference>
<dbReference type="GO" id="GO:0006811">
    <property type="term" value="P:monoatomic ion transport"/>
    <property type="evidence" value="ECO:0007669"/>
    <property type="project" value="UniProtKB-KW"/>
</dbReference>
<dbReference type="GO" id="GO:0015774">
    <property type="term" value="P:polysaccharide transport"/>
    <property type="evidence" value="ECO:0007669"/>
    <property type="project" value="TreeGrafter"/>
</dbReference>
<dbReference type="CDD" id="cd01346">
    <property type="entry name" value="Maltoporin-like"/>
    <property type="match status" value="1"/>
</dbReference>
<dbReference type="FunFam" id="2.40.170.10:FF:000002">
    <property type="entry name" value="Cryptic outer membrane porin BglH"/>
    <property type="match status" value="1"/>
</dbReference>
<dbReference type="Gene3D" id="2.40.170.10">
    <property type="entry name" value="Porin, LamB type"/>
    <property type="match status" value="1"/>
</dbReference>
<dbReference type="InterPro" id="IPR050286">
    <property type="entry name" value="G_neg_Bact_CarbUptk_Porin"/>
</dbReference>
<dbReference type="InterPro" id="IPR021570">
    <property type="entry name" value="LamB-type_porin_N_dom"/>
</dbReference>
<dbReference type="InterPro" id="IPR003192">
    <property type="entry name" value="Porin_LamB"/>
</dbReference>
<dbReference type="InterPro" id="IPR036998">
    <property type="entry name" value="Porin_LamB_sf"/>
</dbReference>
<dbReference type="PANTHER" id="PTHR38762">
    <property type="entry name" value="CRYPTIC OUTER MEMBRANE PORIN BGLH-RELATED"/>
    <property type="match status" value="1"/>
</dbReference>
<dbReference type="PANTHER" id="PTHR38762:SF1">
    <property type="entry name" value="CRYPTIC OUTER MEMBRANE PORIN BGLH-RELATED"/>
    <property type="match status" value="1"/>
</dbReference>
<dbReference type="Pfam" id="PF02264">
    <property type="entry name" value="LamB"/>
    <property type="match status" value="1"/>
</dbReference>
<dbReference type="Pfam" id="PF11471">
    <property type="entry name" value="Sugarporin_N"/>
    <property type="match status" value="1"/>
</dbReference>
<dbReference type="SUPFAM" id="SSF56935">
    <property type="entry name" value="Porins"/>
    <property type="match status" value="1"/>
</dbReference>
<keyword id="KW-0998">Cell outer membrane</keyword>
<keyword id="KW-0406">Ion transport</keyword>
<keyword id="KW-0472">Membrane</keyword>
<keyword id="KW-0626">Porin</keyword>
<keyword id="KW-0732">Signal</keyword>
<keyword id="KW-0812">Transmembrane</keyword>
<keyword id="KW-1134">Transmembrane beta strand</keyword>
<keyword id="KW-0813">Transport</keyword>